<evidence type="ECO:0000250" key="1"/>
<evidence type="ECO:0000250" key="2">
    <source>
        <dbReference type="UniProtKB" id="P18893"/>
    </source>
</evidence>
<evidence type="ECO:0000250" key="3">
    <source>
        <dbReference type="UniProtKB" id="P22301"/>
    </source>
</evidence>
<evidence type="ECO:0000255" key="4"/>
<evidence type="ECO:0000305" key="5"/>
<keyword id="KW-0202">Cytokine</keyword>
<keyword id="KW-1015">Disulfide bond</keyword>
<keyword id="KW-0325">Glycoprotein</keyword>
<keyword id="KW-1185">Reference proteome</keyword>
<keyword id="KW-0964">Secreted</keyword>
<keyword id="KW-0732">Signal</keyword>
<protein>
    <recommendedName>
        <fullName>Interleukin-10</fullName>
        <shortName>IL-10</shortName>
    </recommendedName>
    <alternativeName>
        <fullName>Cytokine synthesis inhibitory factor</fullName>
        <shortName>CSIF</shortName>
    </alternativeName>
</protein>
<accession>Q0Z972</accession>
<feature type="signal peptide" evidence="4">
    <location>
        <begin position="1"/>
        <end position="18"/>
    </location>
</feature>
<feature type="chain" id="PRO_0000250455" description="Interleukin-10">
    <location>
        <begin position="19"/>
        <end position="178"/>
    </location>
</feature>
<feature type="glycosylation site" description="N-linked (GlcNAc...) asparagine" evidence="4">
    <location>
        <position position="134"/>
    </location>
</feature>
<feature type="disulfide bond" evidence="1">
    <location>
        <begin position="30"/>
        <end position="126"/>
    </location>
</feature>
<feature type="disulfide bond" evidence="1">
    <location>
        <begin position="80"/>
        <end position="132"/>
    </location>
</feature>
<gene>
    <name type="primary">IL10</name>
</gene>
<sequence>MHSSALLCCLVFLTGVRASPGQGTQSENSCTHFPGSLPHMLRELRVAFSRVKTFFQKKDQLDSMLLKESLLEDFKGYLGCQALSEMIQFYLEEVMPQAENHDPDIKEHVNSLGEKLKTFRLRLRRCHRFLPCENKSKAVVQVKNAVSKLQEKGIYKAMSEFDIFIDYIEAYMTMKAQN</sequence>
<dbReference type="EMBL" id="DQ658154">
    <property type="protein sequence ID" value="ABG54456.1"/>
    <property type="molecule type" value="mRNA"/>
</dbReference>
<dbReference type="RefSeq" id="XP_002760779.1">
    <property type="nucleotide sequence ID" value="XM_002760733.4"/>
</dbReference>
<dbReference type="SMR" id="Q0Z972"/>
<dbReference type="FunCoup" id="Q0Z972">
    <property type="interactions" value="839"/>
</dbReference>
<dbReference type="STRING" id="9483.ENSCJAP00000034416"/>
<dbReference type="GlyCosmos" id="Q0Z972">
    <property type="glycosylation" value="1 site, No reported glycans"/>
</dbReference>
<dbReference type="Ensembl" id="ENSCJAT00000123321.1">
    <property type="protein sequence ID" value="ENSCJAP00000084383.1"/>
    <property type="gene ID" value="ENSCJAG00000077347.1"/>
</dbReference>
<dbReference type="GeneID" id="100386149"/>
<dbReference type="KEGG" id="cjc:100386149"/>
<dbReference type="CTD" id="3586"/>
<dbReference type="eggNOG" id="ENOG502S22U">
    <property type="taxonomic scope" value="Eukaryota"/>
</dbReference>
<dbReference type="GeneTree" id="ENSGT00950000183124"/>
<dbReference type="HOGENOM" id="CLU_127747_0_0_1"/>
<dbReference type="InParanoid" id="Q0Z972"/>
<dbReference type="OMA" id="CHRFFTC"/>
<dbReference type="OrthoDB" id="9931894at2759"/>
<dbReference type="TreeFam" id="TF333253"/>
<dbReference type="Proteomes" id="UP000008225">
    <property type="component" value="Chromosome 19"/>
</dbReference>
<dbReference type="Bgee" id="ENSCJAG00000018536">
    <property type="expression patterns" value="Expressed in liver and 3 other cell types or tissues"/>
</dbReference>
<dbReference type="GO" id="GO:0005615">
    <property type="term" value="C:extracellular space"/>
    <property type="evidence" value="ECO:0000250"/>
    <property type="project" value="UniProtKB"/>
</dbReference>
<dbReference type="GO" id="GO:0005125">
    <property type="term" value="F:cytokine activity"/>
    <property type="evidence" value="ECO:0007669"/>
    <property type="project" value="UniProtKB-KW"/>
</dbReference>
<dbReference type="GO" id="GO:0046983">
    <property type="term" value="F:protein dimerization activity"/>
    <property type="evidence" value="ECO:0007669"/>
    <property type="project" value="Ensembl"/>
</dbReference>
<dbReference type="GO" id="GO:0060670">
    <property type="term" value="P:branching involved in labyrinthine layer morphogenesis"/>
    <property type="evidence" value="ECO:0007669"/>
    <property type="project" value="Ensembl"/>
</dbReference>
<dbReference type="GO" id="GO:0035729">
    <property type="term" value="P:cellular response to hepatocyte growth factor stimulus"/>
    <property type="evidence" value="ECO:0007669"/>
    <property type="project" value="Ensembl"/>
</dbReference>
<dbReference type="GO" id="GO:0071222">
    <property type="term" value="P:cellular response to lipopolysaccharide"/>
    <property type="evidence" value="ECO:0007669"/>
    <property type="project" value="Ensembl"/>
</dbReference>
<dbReference type="GO" id="GO:0002439">
    <property type="term" value="P:chronic inflammatory response to antigenic stimulus"/>
    <property type="evidence" value="ECO:0007669"/>
    <property type="project" value="Ensembl"/>
</dbReference>
<dbReference type="GO" id="GO:0042742">
    <property type="term" value="P:defense response to bacterium"/>
    <property type="evidence" value="ECO:0007669"/>
    <property type="project" value="Ensembl"/>
</dbReference>
<dbReference type="GO" id="GO:0042832">
    <property type="term" value="P:defense response to protozoan"/>
    <property type="evidence" value="ECO:0007669"/>
    <property type="project" value="Ensembl"/>
</dbReference>
<dbReference type="GO" id="GO:0140105">
    <property type="term" value="P:interleukin-10-mediated signaling pathway"/>
    <property type="evidence" value="ECO:0007669"/>
    <property type="project" value="Ensembl"/>
</dbReference>
<dbReference type="GO" id="GO:0010507">
    <property type="term" value="P:negative regulation of autophagy"/>
    <property type="evidence" value="ECO:0007669"/>
    <property type="project" value="Ensembl"/>
</dbReference>
<dbReference type="GO" id="GO:0030889">
    <property type="term" value="P:negative regulation of B cell proliferation"/>
    <property type="evidence" value="ECO:0000250"/>
    <property type="project" value="UniProtKB"/>
</dbReference>
<dbReference type="GO" id="GO:0002875">
    <property type="term" value="P:negative regulation of chronic inflammatory response to antigenic stimulus"/>
    <property type="evidence" value="ECO:0007669"/>
    <property type="project" value="Ensembl"/>
</dbReference>
<dbReference type="GO" id="GO:0002719">
    <property type="term" value="P:negative regulation of cytokine production involved in immune response"/>
    <property type="evidence" value="ECO:0000250"/>
    <property type="project" value="UniProtKB"/>
</dbReference>
<dbReference type="GO" id="GO:2000352">
    <property type="term" value="P:negative regulation of endothelial cell apoptotic process"/>
    <property type="evidence" value="ECO:0007669"/>
    <property type="project" value="Ensembl"/>
</dbReference>
<dbReference type="GO" id="GO:0034115">
    <property type="term" value="P:negative regulation of heterotypic cell-cell adhesion"/>
    <property type="evidence" value="ECO:0007669"/>
    <property type="project" value="Ensembl"/>
</dbReference>
<dbReference type="GO" id="GO:0050728">
    <property type="term" value="P:negative regulation of inflammatory response"/>
    <property type="evidence" value="ECO:0000250"/>
    <property type="project" value="UniProtKB"/>
</dbReference>
<dbReference type="GO" id="GO:0032695">
    <property type="term" value="P:negative regulation of interleukin-12 production"/>
    <property type="evidence" value="ECO:0007669"/>
    <property type="project" value="Ensembl"/>
</dbReference>
<dbReference type="GO" id="GO:0032715">
    <property type="term" value="P:negative regulation of interleukin-6 production"/>
    <property type="evidence" value="ECO:0000250"/>
    <property type="project" value="UniProtKB"/>
</dbReference>
<dbReference type="GO" id="GO:0051045">
    <property type="term" value="P:negative regulation of membrane protein ectodomain proteolysis"/>
    <property type="evidence" value="ECO:0000250"/>
    <property type="project" value="UniProtKB"/>
</dbReference>
<dbReference type="GO" id="GO:0045347">
    <property type="term" value="P:negative regulation of MHC class II biosynthetic process"/>
    <property type="evidence" value="ECO:0007669"/>
    <property type="project" value="Ensembl"/>
</dbReference>
<dbReference type="GO" id="GO:0030886">
    <property type="term" value="P:negative regulation of myeloid dendritic cell activation"/>
    <property type="evidence" value="ECO:0007669"/>
    <property type="project" value="Ensembl"/>
</dbReference>
<dbReference type="GO" id="GO:1903377">
    <property type="term" value="P:negative regulation of oxidative stress-induced neuron intrinsic apoptotic signaling pathway"/>
    <property type="evidence" value="ECO:0007669"/>
    <property type="project" value="Ensembl"/>
</dbReference>
<dbReference type="GO" id="GO:0032720">
    <property type="term" value="P:negative regulation of tumor necrosis factor production"/>
    <property type="evidence" value="ECO:0007669"/>
    <property type="project" value="Ensembl"/>
</dbReference>
<dbReference type="GO" id="GO:0032689">
    <property type="term" value="P:negative regulation of type II interferon production"/>
    <property type="evidence" value="ECO:0007669"/>
    <property type="project" value="Ensembl"/>
</dbReference>
<dbReference type="GO" id="GO:1904706">
    <property type="term" value="P:negative regulation of vascular associated smooth muscle cell proliferation"/>
    <property type="evidence" value="ECO:0007669"/>
    <property type="project" value="Ensembl"/>
</dbReference>
<dbReference type="GO" id="GO:0002904">
    <property type="term" value="P:positive regulation of B cell apoptotic process"/>
    <property type="evidence" value="ECO:0000250"/>
    <property type="project" value="UniProtKB"/>
</dbReference>
<dbReference type="GO" id="GO:0045787">
    <property type="term" value="P:positive regulation of cell cycle"/>
    <property type="evidence" value="ECO:0007669"/>
    <property type="project" value="Ensembl"/>
</dbReference>
<dbReference type="GO" id="GO:0001819">
    <property type="term" value="P:positive regulation of cytokine production"/>
    <property type="evidence" value="ECO:0000250"/>
    <property type="project" value="UniProtKB"/>
</dbReference>
<dbReference type="GO" id="GO:0051091">
    <property type="term" value="P:positive regulation of DNA-binding transcription factor activity"/>
    <property type="evidence" value="ECO:0000250"/>
    <property type="project" value="UniProtKB"/>
</dbReference>
<dbReference type="GO" id="GO:0045893">
    <property type="term" value="P:positive regulation of DNA-templated transcription"/>
    <property type="evidence" value="ECO:0000250"/>
    <property type="project" value="UniProtKB"/>
</dbReference>
<dbReference type="GO" id="GO:0001938">
    <property type="term" value="P:positive regulation of endothelial cell proliferation"/>
    <property type="evidence" value="ECO:0007669"/>
    <property type="project" value="Ensembl"/>
</dbReference>
<dbReference type="GO" id="GO:0002639">
    <property type="term" value="P:positive regulation of immunoglobulin production"/>
    <property type="evidence" value="ECO:0007669"/>
    <property type="project" value="Ensembl"/>
</dbReference>
<dbReference type="GO" id="GO:0045348">
    <property type="term" value="P:positive regulation of MHC class II biosynthetic process"/>
    <property type="evidence" value="ECO:0007669"/>
    <property type="project" value="Ensembl"/>
</dbReference>
<dbReference type="GO" id="GO:1902895">
    <property type="term" value="P:positive regulation of miRNA transcription"/>
    <property type="evidence" value="ECO:0007669"/>
    <property type="project" value="Ensembl"/>
</dbReference>
<dbReference type="GO" id="GO:1900100">
    <property type="term" value="P:positive regulation of plasma cell differentiation"/>
    <property type="evidence" value="ECO:0007669"/>
    <property type="project" value="Ensembl"/>
</dbReference>
<dbReference type="GO" id="GO:0046427">
    <property type="term" value="P:positive regulation of receptor signaling pathway via JAK-STAT"/>
    <property type="evidence" value="ECO:0007669"/>
    <property type="project" value="Ensembl"/>
</dbReference>
<dbReference type="GO" id="GO:1903672">
    <property type="term" value="P:positive regulation of sprouting angiogenesis"/>
    <property type="evidence" value="ECO:0007669"/>
    <property type="project" value="Ensembl"/>
</dbReference>
<dbReference type="GO" id="GO:0045944">
    <property type="term" value="P:positive regulation of transcription by RNA polymerase II"/>
    <property type="evidence" value="ECO:0007669"/>
    <property type="project" value="Ensembl"/>
</dbReference>
<dbReference type="GO" id="GO:1903034">
    <property type="term" value="P:regulation of response to wounding"/>
    <property type="evidence" value="ECO:0007669"/>
    <property type="project" value="Ensembl"/>
</dbReference>
<dbReference type="GO" id="GO:0051384">
    <property type="term" value="P:response to glucocorticoid"/>
    <property type="evidence" value="ECO:0000250"/>
    <property type="project" value="UniProtKB"/>
</dbReference>
<dbReference type="GO" id="GO:0002237">
    <property type="term" value="P:response to molecule of bacterial origin"/>
    <property type="evidence" value="ECO:0000250"/>
    <property type="project" value="UniProtKB"/>
</dbReference>
<dbReference type="FunFam" id="1.20.1250.10:FF:000011">
    <property type="entry name" value="Interleukin-10"/>
    <property type="match status" value="1"/>
</dbReference>
<dbReference type="Gene3D" id="1.20.1250.10">
    <property type="match status" value="1"/>
</dbReference>
<dbReference type="InterPro" id="IPR009079">
    <property type="entry name" value="4_helix_cytokine-like_core"/>
</dbReference>
<dbReference type="InterPro" id="IPR000098">
    <property type="entry name" value="IL-10"/>
</dbReference>
<dbReference type="InterPro" id="IPR020443">
    <property type="entry name" value="IL-10/19/20/24/26"/>
</dbReference>
<dbReference type="InterPro" id="IPR020423">
    <property type="entry name" value="IL-10_CS"/>
</dbReference>
<dbReference type="PANTHER" id="PTHR48482:SF5">
    <property type="entry name" value="INTERLEUKIN-10"/>
    <property type="match status" value="1"/>
</dbReference>
<dbReference type="PANTHER" id="PTHR48482">
    <property type="entry name" value="INTERLEUKIN-19-RELATED"/>
    <property type="match status" value="1"/>
</dbReference>
<dbReference type="Pfam" id="PF00726">
    <property type="entry name" value="IL10"/>
    <property type="match status" value="1"/>
</dbReference>
<dbReference type="PRINTS" id="PR01294">
    <property type="entry name" value="INTRLEUKIN10"/>
</dbReference>
<dbReference type="SMART" id="SM00188">
    <property type="entry name" value="IL10"/>
    <property type="match status" value="1"/>
</dbReference>
<dbReference type="SUPFAM" id="SSF47266">
    <property type="entry name" value="4-helical cytokines"/>
    <property type="match status" value="1"/>
</dbReference>
<dbReference type="PROSITE" id="PS00520">
    <property type="entry name" value="INTERLEUKIN_10"/>
    <property type="match status" value="1"/>
</dbReference>
<name>IL10_CALJA</name>
<organism>
    <name type="scientific">Callithrix jacchus</name>
    <name type="common">White-tufted-ear marmoset</name>
    <dbReference type="NCBI Taxonomy" id="9483"/>
    <lineage>
        <taxon>Eukaryota</taxon>
        <taxon>Metazoa</taxon>
        <taxon>Chordata</taxon>
        <taxon>Craniata</taxon>
        <taxon>Vertebrata</taxon>
        <taxon>Euteleostomi</taxon>
        <taxon>Mammalia</taxon>
        <taxon>Eutheria</taxon>
        <taxon>Euarchontoglires</taxon>
        <taxon>Primates</taxon>
        <taxon>Haplorrhini</taxon>
        <taxon>Platyrrhini</taxon>
        <taxon>Cebidae</taxon>
        <taxon>Callitrichinae</taxon>
        <taxon>Callithrix</taxon>
        <taxon>Callithrix</taxon>
    </lineage>
</organism>
<reference key="1">
    <citation type="submission" date="2006-05" db="EMBL/GenBank/DDBJ databases">
        <title>Common marmoset interleukin 10.</title>
        <authorList>
            <person name="Yamabe E."/>
            <person name="Kohu K."/>
            <person name="Suemizu H."/>
            <person name="Sasaki E."/>
            <person name="Tanioka Y."/>
            <person name="Yagita H."/>
            <person name="Habu S."/>
            <person name="Satake M."/>
        </authorList>
    </citation>
    <scope>NUCLEOTIDE SEQUENCE [MRNA]</scope>
</reference>
<proteinExistence type="evidence at transcript level"/>
<comment type="function">
    <text evidence="2 3">Major immune regulatory cytokine that acts on many cells of the immune system where it has profound anti-inflammatory functions, limiting excessive tissue disruption caused by inflammation. Mechanistically, IL10 binds to its heterotetrameric receptor comprising IL10RA and IL10RB leading to JAK1 and STAT2-mediated phosphorylation of STAT3. In turn, STAT3 translocates to the nucleus where it drives expression of anti-inflammatory mediators. Targets antigen-presenting cells (APCs) such as macrophages and monocytes and inhibits their release of pro-inflammatory cytokines including granulocyte-macrophage colony-stimulating factor /GM-CSF, granulocyte colony-stimulating factor/G-CSF, IL-1 alpha, IL-1 beta, IL-6, IL-8 and TNF-alpha. Also interferes with antigen presentation by reducing the expression of MHC-class II and co-stimulatory molecules, thereby inhibiting their ability to induce T cell activation (By similarity). In addition, controls the inflammatory response of macrophages by reprogramming essential metabolic pathways including mTOR signaling (By similarity).</text>
</comment>
<comment type="subunit">
    <text evidence="3">Homodimer. Interacts with IL10RA and IL10RB.</text>
</comment>
<comment type="subcellular location">
    <subcellularLocation>
        <location evidence="3">Secreted</location>
    </subcellularLocation>
</comment>
<comment type="similarity">
    <text evidence="5">Belongs to the IL-10 family.</text>
</comment>